<organism>
    <name type="scientific">Arabidopsis thaliana</name>
    <name type="common">Mouse-ear cress</name>
    <dbReference type="NCBI Taxonomy" id="3702"/>
    <lineage>
        <taxon>Eukaryota</taxon>
        <taxon>Viridiplantae</taxon>
        <taxon>Streptophyta</taxon>
        <taxon>Embryophyta</taxon>
        <taxon>Tracheophyta</taxon>
        <taxon>Spermatophyta</taxon>
        <taxon>Magnoliopsida</taxon>
        <taxon>eudicotyledons</taxon>
        <taxon>Gunneridae</taxon>
        <taxon>Pentapetalae</taxon>
        <taxon>rosids</taxon>
        <taxon>malvids</taxon>
        <taxon>Brassicales</taxon>
        <taxon>Brassicaceae</taxon>
        <taxon>Camelineae</taxon>
        <taxon>Arabidopsis</taxon>
    </lineage>
</organism>
<protein>
    <recommendedName>
        <fullName>Pentatricopeptide repeat-containing protein At3g18970</fullName>
    </recommendedName>
</protein>
<feature type="chain" id="PRO_0000356102" description="Pentatricopeptide repeat-containing protein At3g18970">
    <location>
        <begin position="1"/>
        <end position="472"/>
    </location>
</feature>
<feature type="repeat" description="PPR 1">
    <location>
        <begin position="107"/>
        <end position="139"/>
    </location>
</feature>
<feature type="repeat" description="PPR 2">
    <location>
        <begin position="146"/>
        <end position="180"/>
    </location>
</feature>
<feature type="repeat" description="PPR 3">
    <location>
        <begin position="181"/>
        <end position="216"/>
    </location>
</feature>
<feature type="repeat" description="PPR 4">
    <location>
        <begin position="219"/>
        <end position="253"/>
    </location>
</feature>
<feature type="repeat" description="PPR 5">
    <location>
        <begin position="256"/>
        <end position="286"/>
    </location>
</feature>
<feature type="repeat" description="PPR 6">
    <location>
        <begin position="287"/>
        <end position="321"/>
    </location>
</feature>
<feature type="repeat" description="PPR 7">
    <location>
        <begin position="322"/>
        <end position="352"/>
    </location>
</feature>
<feature type="repeat" description="PPR 8">
    <location>
        <begin position="358"/>
        <end position="388"/>
    </location>
</feature>
<feature type="region of interest" description="Type E motif; degenerate">
    <location>
        <begin position="393"/>
        <end position="472"/>
    </location>
</feature>
<name>PP243_ARATH</name>
<evidence type="ECO:0000305" key="1"/>
<gene>
    <name type="primary">PCMP-E93</name>
    <name type="ordered locus">At3g18970</name>
    <name type="ORF">K13E13.8</name>
</gene>
<sequence>MSSVFPGPRFLSLLQQNSKTLIQAKQIHAQLVINGCHDNSLFGKLIGHYCSKPSTESSSKLAHLLVFPRFGHPDKFLFNTLLKCSKPEDSIRIFANYASKSSLLYLNERTFVFVLGACARSASSSALRVGRIVHGMVKKLGFLYESELIGTTLLHFYAKNGDLRYARKVFDEMPERTSVTWNAMIGGYCSHKDKGNHNARKAMVLFRRFSCCGSGVRPTDTTMVCVLSAISQTGLLEIGSLVHGYIEKLGFTPEVDVFIGTALVDMYSKCGCLNNAFSVFELMKVKNVFTWTSMATGLALNGRGNETPNLLNRMAESGIKPNEITFTSLLSAYRHIGLVEEGIELFKSMKTRFGVTPVIEHYGCIVDLLGKAGRIQEAYQFILAMPIKPDAILLRSLCNACSIYGETVMGEEIGKALLEIEREDEKLSGSECEDYVALSNVLAHKGKWVEVEKLRKEMKERRIKTRPGYSFV</sequence>
<dbReference type="EMBL" id="AP000735">
    <property type="protein sequence ID" value="BAB01693.1"/>
    <property type="molecule type" value="Genomic_DNA"/>
</dbReference>
<dbReference type="EMBL" id="CP002686">
    <property type="protein sequence ID" value="AEE76175.1"/>
    <property type="molecule type" value="Genomic_DNA"/>
</dbReference>
<dbReference type="EMBL" id="BT030396">
    <property type="protein sequence ID" value="ABO45699.1"/>
    <property type="molecule type" value="mRNA"/>
</dbReference>
<dbReference type="SMR" id="Q9LJ69"/>
<dbReference type="FunCoup" id="Q9LJ69">
    <property type="interactions" value="211"/>
</dbReference>
<dbReference type="STRING" id="3702.Q9LJ69"/>
<dbReference type="PaxDb" id="3702-AT3G18970.1"/>
<dbReference type="ProteomicsDB" id="249095"/>
<dbReference type="EnsemblPlants" id="AT3G18970.1">
    <property type="protein sequence ID" value="AT3G18970.1"/>
    <property type="gene ID" value="AT3G18970"/>
</dbReference>
<dbReference type="Gramene" id="AT3G18970.1">
    <property type="protein sequence ID" value="AT3G18970.1"/>
    <property type="gene ID" value="AT3G18970"/>
</dbReference>
<dbReference type="KEGG" id="ath:AT3G18970"/>
<dbReference type="Araport" id="AT3G18970"/>
<dbReference type="TAIR" id="AT3G18970">
    <property type="gene designation" value="MEF20"/>
</dbReference>
<dbReference type="eggNOG" id="KOG4197">
    <property type="taxonomic scope" value="Eukaryota"/>
</dbReference>
<dbReference type="HOGENOM" id="CLU_002706_0_6_1"/>
<dbReference type="InParanoid" id="Q9LJ69"/>
<dbReference type="OMA" id="FANWVSK"/>
<dbReference type="OrthoDB" id="992115at2759"/>
<dbReference type="PhylomeDB" id="Q9LJ69"/>
<dbReference type="PRO" id="PR:Q9LJ69"/>
<dbReference type="Proteomes" id="UP000006548">
    <property type="component" value="Chromosome 3"/>
</dbReference>
<dbReference type="ExpressionAtlas" id="Q9LJ69">
    <property type="expression patterns" value="baseline and differential"/>
</dbReference>
<dbReference type="GO" id="GO:0005739">
    <property type="term" value="C:mitochondrion"/>
    <property type="evidence" value="ECO:0007669"/>
    <property type="project" value="GOC"/>
</dbReference>
<dbReference type="GO" id="GO:0003723">
    <property type="term" value="F:RNA binding"/>
    <property type="evidence" value="ECO:0007669"/>
    <property type="project" value="InterPro"/>
</dbReference>
<dbReference type="GO" id="GO:0080156">
    <property type="term" value="P:mitochondrial mRNA modification"/>
    <property type="evidence" value="ECO:0000315"/>
    <property type="project" value="TAIR"/>
</dbReference>
<dbReference type="FunFam" id="1.25.40.10:FF:001207">
    <property type="entry name" value="Pentatricopeptide repeat-containing protein At3g18970"/>
    <property type="match status" value="1"/>
</dbReference>
<dbReference type="FunFam" id="1.25.40.10:FF:000090">
    <property type="entry name" value="Pentatricopeptide repeat-containing protein, chloroplastic"/>
    <property type="match status" value="1"/>
</dbReference>
<dbReference type="Gene3D" id="1.25.40.10">
    <property type="entry name" value="Tetratricopeptide repeat domain"/>
    <property type="match status" value="3"/>
</dbReference>
<dbReference type="InterPro" id="IPR046848">
    <property type="entry name" value="E_motif"/>
</dbReference>
<dbReference type="InterPro" id="IPR002885">
    <property type="entry name" value="Pentatricopeptide_rpt"/>
</dbReference>
<dbReference type="InterPro" id="IPR046960">
    <property type="entry name" value="PPR_At4g14850-like_plant"/>
</dbReference>
<dbReference type="InterPro" id="IPR011990">
    <property type="entry name" value="TPR-like_helical_dom_sf"/>
</dbReference>
<dbReference type="NCBIfam" id="TIGR00756">
    <property type="entry name" value="PPR"/>
    <property type="match status" value="3"/>
</dbReference>
<dbReference type="PANTHER" id="PTHR47926:SF537">
    <property type="entry name" value="PENTACOTRIPEPTIDE-REPEAT REGION OF PRORP DOMAIN-CONTAINING PROTEIN"/>
    <property type="match status" value="1"/>
</dbReference>
<dbReference type="PANTHER" id="PTHR47926">
    <property type="entry name" value="PENTATRICOPEPTIDE REPEAT-CONTAINING PROTEIN"/>
    <property type="match status" value="1"/>
</dbReference>
<dbReference type="Pfam" id="PF20431">
    <property type="entry name" value="E_motif"/>
    <property type="match status" value="1"/>
</dbReference>
<dbReference type="Pfam" id="PF01535">
    <property type="entry name" value="PPR"/>
    <property type="match status" value="2"/>
</dbReference>
<dbReference type="Pfam" id="PF13041">
    <property type="entry name" value="PPR_2"/>
    <property type="match status" value="1"/>
</dbReference>
<dbReference type="PROSITE" id="PS51375">
    <property type="entry name" value="PPR"/>
    <property type="match status" value="7"/>
</dbReference>
<comment type="similarity">
    <text evidence="1">Belongs to the PPR family. PCMP-E subfamily.</text>
</comment>
<comment type="online information" name="Pentatricopeptide repeat proteins">
    <link uri="https://ppr.plantenergy.uwa.edu.au"/>
</comment>
<proteinExistence type="evidence at transcript level"/>
<keyword id="KW-1185">Reference proteome</keyword>
<keyword id="KW-0677">Repeat</keyword>
<reference key="1">
    <citation type="journal article" date="2000" name="DNA Res.">
        <title>Structural analysis of Arabidopsis thaliana chromosome 3. II. Sequence features of the 4,251,695 bp regions covered by 90 P1, TAC and BAC clones.</title>
        <authorList>
            <person name="Kaneko T."/>
            <person name="Katoh T."/>
            <person name="Sato S."/>
            <person name="Nakamura Y."/>
            <person name="Asamizu E."/>
            <person name="Tabata S."/>
        </authorList>
    </citation>
    <scope>NUCLEOTIDE SEQUENCE [LARGE SCALE GENOMIC DNA]</scope>
    <source>
        <strain>cv. Columbia</strain>
    </source>
</reference>
<reference key="2">
    <citation type="journal article" date="2017" name="Plant J.">
        <title>Araport11: a complete reannotation of the Arabidopsis thaliana reference genome.</title>
        <authorList>
            <person name="Cheng C.Y."/>
            <person name="Krishnakumar V."/>
            <person name="Chan A.P."/>
            <person name="Thibaud-Nissen F."/>
            <person name="Schobel S."/>
            <person name="Town C.D."/>
        </authorList>
    </citation>
    <scope>GENOME REANNOTATION</scope>
    <source>
        <strain>cv. Columbia</strain>
    </source>
</reference>
<reference key="3">
    <citation type="submission" date="2007-03" db="EMBL/GenBank/DDBJ databases">
        <title>Arabidopsis ORF clones.</title>
        <authorList>
            <person name="Kim C.J."/>
            <person name="Bautista V.R."/>
            <person name="Chen H."/>
            <person name="De Los Reyes C."/>
            <person name="Wu S.Y."/>
            <person name="Ecker J.R."/>
        </authorList>
    </citation>
    <scope>NUCLEOTIDE SEQUENCE [LARGE SCALE MRNA]</scope>
    <source>
        <strain>cv. Columbia</strain>
    </source>
</reference>
<reference key="4">
    <citation type="journal article" date="2004" name="Plant Cell">
        <title>Genome-wide analysis of Arabidopsis pentatricopeptide repeat proteins reveals their essential role in organelle biogenesis.</title>
        <authorList>
            <person name="Lurin C."/>
            <person name="Andres C."/>
            <person name="Aubourg S."/>
            <person name="Bellaoui M."/>
            <person name="Bitton F."/>
            <person name="Bruyere C."/>
            <person name="Caboche M."/>
            <person name="Debast C."/>
            <person name="Gualberto J."/>
            <person name="Hoffmann B."/>
            <person name="Lecharny A."/>
            <person name="Le Ret M."/>
            <person name="Martin-Magniette M.-L."/>
            <person name="Mireau H."/>
            <person name="Peeters N."/>
            <person name="Renou J.-P."/>
            <person name="Szurek B."/>
            <person name="Taconnat L."/>
            <person name="Small I."/>
        </authorList>
    </citation>
    <scope>GENE FAMILY</scope>
</reference>
<accession>Q9LJ69</accession>